<keyword id="KW-0342">GTP-binding</keyword>
<keyword id="KW-0547">Nucleotide-binding</keyword>
<keyword id="KW-0677">Repeat</keyword>
<keyword id="KW-0690">Ribosome biogenesis</keyword>
<reference key="1">
    <citation type="journal article" date="2004" name="Nat. Genet.">
        <title>Evidence in the Legionella pneumophila genome for exploitation of host cell functions and high genome plasticity.</title>
        <authorList>
            <person name="Cazalet C."/>
            <person name="Rusniok C."/>
            <person name="Brueggemann H."/>
            <person name="Zidane N."/>
            <person name="Magnier A."/>
            <person name="Ma L."/>
            <person name="Tichit M."/>
            <person name="Jarraud S."/>
            <person name="Bouchier C."/>
            <person name="Vandenesch F."/>
            <person name="Kunst F."/>
            <person name="Etienne J."/>
            <person name="Glaser P."/>
            <person name="Buchrieser C."/>
        </authorList>
    </citation>
    <scope>NUCLEOTIDE SEQUENCE [LARGE SCALE GENOMIC DNA]</scope>
    <source>
        <strain>Lens</strain>
    </source>
</reference>
<accession>Q5WWG8</accession>
<proteinExistence type="inferred from homology"/>
<sequence>MIPVIALVGRPNVGKSTLFNRITKTQDALVADFPGLTRDRQYGHAQHENKSFIIVDTGGIGVDDIEVDTLMSKQSQVALNEANVILFLVDGRSGLTGIDQQIAQALRKLNKKVHLVVNKTDGINEDIACADFQSLGITDIHAISASHGGGISSLLEEILEPFITEMHEATDDKAIKIAFAGRPNVGKSTLINRILGEERVVVYDMPGTTRDSISIPFTREDKQYVLIDTAGVRRKSRIDEKIEKFSVIKTLQAIKEAHVCLLLLDANEGITDQDMNLLGFIIESGKALVIAVNKWDGLEEEHKEKIKSELSRRLHFANFAKIRFISALHGSGVGGLFKDINEAYHSAIQSFSTPKLTRLLQDISAKHTPPCINGRRIKLRYAHLGGHNPPVIVIHGNQLDALPESYKRYLNNEFIKHLGLVGTPLKIEFKGGQNPFANKKNKLSQRQVNKKKRLMRWAKNKK</sequence>
<evidence type="ECO:0000255" key="1">
    <source>
        <dbReference type="HAMAP-Rule" id="MF_00195"/>
    </source>
</evidence>
<feature type="chain" id="PRO_1000011657" description="GTPase Der">
    <location>
        <begin position="1"/>
        <end position="462"/>
    </location>
</feature>
<feature type="domain" description="EngA-type G 1">
    <location>
        <begin position="3"/>
        <end position="166"/>
    </location>
</feature>
<feature type="domain" description="EngA-type G 2">
    <location>
        <begin position="175"/>
        <end position="348"/>
    </location>
</feature>
<feature type="domain" description="KH-like" evidence="1">
    <location>
        <begin position="349"/>
        <end position="433"/>
    </location>
</feature>
<feature type="binding site" evidence="1">
    <location>
        <begin position="9"/>
        <end position="16"/>
    </location>
    <ligand>
        <name>GTP</name>
        <dbReference type="ChEBI" id="CHEBI:37565"/>
        <label>1</label>
    </ligand>
</feature>
<feature type="binding site" evidence="1">
    <location>
        <begin position="56"/>
        <end position="60"/>
    </location>
    <ligand>
        <name>GTP</name>
        <dbReference type="ChEBI" id="CHEBI:37565"/>
        <label>1</label>
    </ligand>
</feature>
<feature type="binding site" evidence="1">
    <location>
        <begin position="118"/>
        <end position="121"/>
    </location>
    <ligand>
        <name>GTP</name>
        <dbReference type="ChEBI" id="CHEBI:37565"/>
        <label>1</label>
    </ligand>
</feature>
<feature type="binding site" evidence="1">
    <location>
        <begin position="181"/>
        <end position="188"/>
    </location>
    <ligand>
        <name>GTP</name>
        <dbReference type="ChEBI" id="CHEBI:37565"/>
        <label>2</label>
    </ligand>
</feature>
<feature type="binding site" evidence="1">
    <location>
        <begin position="228"/>
        <end position="232"/>
    </location>
    <ligand>
        <name>GTP</name>
        <dbReference type="ChEBI" id="CHEBI:37565"/>
        <label>2</label>
    </ligand>
</feature>
<feature type="binding site" evidence="1">
    <location>
        <begin position="293"/>
        <end position="296"/>
    </location>
    <ligand>
        <name>GTP</name>
        <dbReference type="ChEBI" id="CHEBI:37565"/>
        <label>2</label>
    </ligand>
</feature>
<comment type="function">
    <text evidence="1">GTPase that plays an essential role in the late steps of ribosome biogenesis.</text>
</comment>
<comment type="subunit">
    <text evidence="1">Associates with the 50S ribosomal subunit.</text>
</comment>
<comment type="similarity">
    <text evidence="1">Belongs to the TRAFAC class TrmE-Era-EngA-EngB-Septin-like GTPase superfamily. EngA (Der) GTPase family.</text>
</comment>
<protein>
    <recommendedName>
        <fullName evidence="1">GTPase Der</fullName>
    </recommendedName>
    <alternativeName>
        <fullName evidence="1">GTP-binding protein EngA</fullName>
    </alternativeName>
</protein>
<name>DER_LEGPL</name>
<organism>
    <name type="scientific">Legionella pneumophila (strain Lens)</name>
    <dbReference type="NCBI Taxonomy" id="297245"/>
    <lineage>
        <taxon>Bacteria</taxon>
        <taxon>Pseudomonadati</taxon>
        <taxon>Pseudomonadota</taxon>
        <taxon>Gammaproteobacteria</taxon>
        <taxon>Legionellales</taxon>
        <taxon>Legionellaceae</taxon>
        <taxon>Legionella</taxon>
    </lineage>
</organism>
<dbReference type="EMBL" id="CR628337">
    <property type="protein sequence ID" value="CAH15725.1"/>
    <property type="molecule type" value="Genomic_DNA"/>
</dbReference>
<dbReference type="RefSeq" id="WP_011215533.1">
    <property type="nucleotide sequence ID" value="NC_006369.1"/>
</dbReference>
<dbReference type="SMR" id="Q5WWG8"/>
<dbReference type="KEGG" id="lpf:lpl1485"/>
<dbReference type="LegioList" id="lpl1485"/>
<dbReference type="HOGENOM" id="CLU_016077_6_2_6"/>
<dbReference type="Proteomes" id="UP000002517">
    <property type="component" value="Chromosome"/>
</dbReference>
<dbReference type="GO" id="GO:0005525">
    <property type="term" value="F:GTP binding"/>
    <property type="evidence" value="ECO:0007669"/>
    <property type="project" value="UniProtKB-UniRule"/>
</dbReference>
<dbReference type="GO" id="GO:0043022">
    <property type="term" value="F:ribosome binding"/>
    <property type="evidence" value="ECO:0007669"/>
    <property type="project" value="TreeGrafter"/>
</dbReference>
<dbReference type="GO" id="GO:0042254">
    <property type="term" value="P:ribosome biogenesis"/>
    <property type="evidence" value="ECO:0007669"/>
    <property type="project" value="UniProtKB-KW"/>
</dbReference>
<dbReference type="CDD" id="cd01894">
    <property type="entry name" value="EngA1"/>
    <property type="match status" value="1"/>
</dbReference>
<dbReference type="CDD" id="cd01895">
    <property type="entry name" value="EngA2"/>
    <property type="match status" value="1"/>
</dbReference>
<dbReference type="FunFam" id="3.30.300.20:FF:000004">
    <property type="entry name" value="GTPase Der"/>
    <property type="match status" value="1"/>
</dbReference>
<dbReference type="FunFam" id="3.40.50.300:FF:000040">
    <property type="entry name" value="GTPase Der"/>
    <property type="match status" value="1"/>
</dbReference>
<dbReference type="FunFam" id="3.40.50.300:FF:000057">
    <property type="entry name" value="GTPase Der"/>
    <property type="match status" value="1"/>
</dbReference>
<dbReference type="Gene3D" id="3.30.300.20">
    <property type="match status" value="1"/>
</dbReference>
<dbReference type="Gene3D" id="3.40.50.300">
    <property type="entry name" value="P-loop containing nucleotide triphosphate hydrolases"/>
    <property type="match status" value="2"/>
</dbReference>
<dbReference type="HAMAP" id="MF_00195">
    <property type="entry name" value="GTPase_Der"/>
    <property type="match status" value="1"/>
</dbReference>
<dbReference type="InterPro" id="IPR031166">
    <property type="entry name" value="G_ENGA"/>
</dbReference>
<dbReference type="InterPro" id="IPR006073">
    <property type="entry name" value="GTP-bd"/>
</dbReference>
<dbReference type="InterPro" id="IPR016484">
    <property type="entry name" value="GTPase_Der"/>
</dbReference>
<dbReference type="InterPro" id="IPR032859">
    <property type="entry name" value="KH_dom-like"/>
</dbReference>
<dbReference type="InterPro" id="IPR015946">
    <property type="entry name" value="KH_dom-like_a/b"/>
</dbReference>
<dbReference type="InterPro" id="IPR027417">
    <property type="entry name" value="P-loop_NTPase"/>
</dbReference>
<dbReference type="InterPro" id="IPR005225">
    <property type="entry name" value="Small_GTP-bd"/>
</dbReference>
<dbReference type="NCBIfam" id="TIGR03594">
    <property type="entry name" value="GTPase_EngA"/>
    <property type="match status" value="1"/>
</dbReference>
<dbReference type="NCBIfam" id="TIGR00231">
    <property type="entry name" value="small_GTP"/>
    <property type="match status" value="2"/>
</dbReference>
<dbReference type="PANTHER" id="PTHR43834">
    <property type="entry name" value="GTPASE DER"/>
    <property type="match status" value="1"/>
</dbReference>
<dbReference type="PANTHER" id="PTHR43834:SF6">
    <property type="entry name" value="GTPASE DER"/>
    <property type="match status" value="1"/>
</dbReference>
<dbReference type="Pfam" id="PF14714">
    <property type="entry name" value="KH_dom-like"/>
    <property type="match status" value="1"/>
</dbReference>
<dbReference type="Pfam" id="PF01926">
    <property type="entry name" value="MMR_HSR1"/>
    <property type="match status" value="2"/>
</dbReference>
<dbReference type="PIRSF" id="PIRSF006485">
    <property type="entry name" value="GTP-binding_EngA"/>
    <property type="match status" value="1"/>
</dbReference>
<dbReference type="PRINTS" id="PR00326">
    <property type="entry name" value="GTP1OBG"/>
</dbReference>
<dbReference type="SUPFAM" id="SSF52540">
    <property type="entry name" value="P-loop containing nucleoside triphosphate hydrolases"/>
    <property type="match status" value="2"/>
</dbReference>
<dbReference type="PROSITE" id="PS51712">
    <property type="entry name" value="G_ENGA"/>
    <property type="match status" value="2"/>
</dbReference>
<gene>
    <name evidence="1" type="primary">der</name>
    <name type="synonym">engA</name>
    <name type="ordered locus">lpl1485</name>
</gene>